<dbReference type="EMBL" id="AE014134">
    <property type="protein sequence ID" value="AAN11114.1"/>
    <property type="molecule type" value="Genomic_DNA"/>
</dbReference>
<dbReference type="RefSeq" id="NP_724329.1">
    <molecule id="P58956-1"/>
    <property type="nucleotide sequence ID" value="NM_165370.1"/>
</dbReference>
<dbReference type="SMR" id="P58956"/>
<dbReference type="IntAct" id="P58956">
    <property type="interactions" value="11"/>
</dbReference>
<dbReference type="EnsemblMetazoa" id="FBtr0081508">
    <molecule id="P58956-1"/>
    <property type="protein sequence ID" value="FBpp0081036"/>
    <property type="gene ID" value="FBgn0264556"/>
</dbReference>
<dbReference type="GeneID" id="117346"/>
<dbReference type="KEGG" id="dme:Dmel_CG31622"/>
<dbReference type="AGR" id="FB:FBgn0264556"/>
<dbReference type="CTD" id="117346"/>
<dbReference type="FlyBase" id="FBgn0264556">
    <property type="gene designation" value="Gr39a"/>
</dbReference>
<dbReference type="VEuPathDB" id="VectorBase:FBgn0264556"/>
<dbReference type="GeneTree" id="ENSGT00940000166130"/>
<dbReference type="OrthoDB" id="6748730at2759"/>
<dbReference type="SignaLink" id="P58956"/>
<dbReference type="BioGRID-ORCS" id="117346">
    <property type="hits" value="0 hits in 1 CRISPR screen"/>
</dbReference>
<dbReference type="GenomeRNAi" id="117346"/>
<dbReference type="Proteomes" id="UP000000803">
    <property type="component" value="Chromosome 2L"/>
</dbReference>
<dbReference type="Bgee" id="FBgn0264556">
    <property type="expression patterns" value="Expressed in adult Malpighian tubule principal cell of lower segment in Malpighian tubule and 39 other cell types or tissues"/>
</dbReference>
<dbReference type="ExpressionAtlas" id="P58956">
    <property type="expression patterns" value="baseline and differential"/>
</dbReference>
<dbReference type="GO" id="GO:0030424">
    <property type="term" value="C:axon"/>
    <property type="evidence" value="ECO:0000318"/>
    <property type="project" value="GO_Central"/>
</dbReference>
<dbReference type="GO" id="GO:0030425">
    <property type="term" value="C:dendrite"/>
    <property type="evidence" value="ECO:0000318"/>
    <property type="project" value="GO_Central"/>
</dbReference>
<dbReference type="GO" id="GO:0016020">
    <property type="term" value="C:membrane"/>
    <property type="evidence" value="ECO:0000303"/>
    <property type="project" value="UniProtKB"/>
</dbReference>
<dbReference type="GO" id="GO:0043025">
    <property type="term" value="C:neuronal cell body"/>
    <property type="evidence" value="ECO:0000318"/>
    <property type="project" value="GO_Central"/>
</dbReference>
<dbReference type="GO" id="GO:0005886">
    <property type="term" value="C:plasma membrane"/>
    <property type="evidence" value="ECO:0007669"/>
    <property type="project" value="UniProtKB-SubCell"/>
</dbReference>
<dbReference type="GO" id="GO:0008527">
    <property type="term" value="F:taste receptor activity"/>
    <property type="evidence" value="ECO:0000303"/>
    <property type="project" value="UniProtKB"/>
</dbReference>
<dbReference type="GO" id="GO:0007635">
    <property type="term" value="P:chemosensory behavior"/>
    <property type="evidence" value="ECO:0000318"/>
    <property type="project" value="GO_Central"/>
</dbReference>
<dbReference type="GO" id="GO:0008049">
    <property type="term" value="P:male courtship behavior"/>
    <property type="evidence" value="ECO:0000315"/>
    <property type="project" value="FlyBase"/>
</dbReference>
<dbReference type="GO" id="GO:0050909">
    <property type="term" value="P:sensory perception of taste"/>
    <property type="evidence" value="ECO:0000303"/>
    <property type="project" value="UniProtKB"/>
</dbReference>
<dbReference type="GO" id="GO:0007165">
    <property type="term" value="P:signal transduction"/>
    <property type="evidence" value="ECO:0007669"/>
    <property type="project" value="UniProtKB-KW"/>
</dbReference>
<dbReference type="InterPro" id="IPR013604">
    <property type="entry name" value="7TM_chemorcpt"/>
</dbReference>
<dbReference type="PANTHER" id="PTHR21143:SF133">
    <property type="entry name" value="GUSTATORY AND PHEROMONE RECEPTOR 32A-RELATED"/>
    <property type="match status" value="1"/>
</dbReference>
<dbReference type="PANTHER" id="PTHR21143">
    <property type="entry name" value="INVERTEBRATE GUSTATORY RECEPTOR"/>
    <property type="match status" value="1"/>
</dbReference>
<dbReference type="Pfam" id="PF08395">
    <property type="entry name" value="7tm_7"/>
    <property type="match status" value="1"/>
</dbReference>
<protein>
    <recommendedName>
        <fullName>Gustatory and pheromone receptor 39a, isoform B</fullName>
    </recommendedName>
</protein>
<name>G39AA_DROME</name>
<evidence type="ECO:0000250" key="1"/>
<evidence type="ECO:0000255" key="2"/>
<evidence type="ECO:0000269" key="3">
    <source>
    </source>
</evidence>
<evidence type="ECO:0000269" key="4">
    <source>
    </source>
</evidence>
<evidence type="ECO:0000269" key="5">
    <source>
    </source>
</evidence>
<evidence type="ECO:0000305" key="6"/>
<comment type="function">
    <text evidence="4">Gustatory receptor which mediates acceptance or avoidance behavior, depending on its substrates. Plays a role in sustaining courtship behavior in males, possibly through the reception of a stimulating arrestant pheromone.</text>
</comment>
<comment type="subcellular location">
    <subcellularLocation>
        <location evidence="1">Cell membrane</location>
        <topology evidence="1">Multi-pass membrane protein</topology>
    </subcellularLocation>
</comment>
<comment type="alternative products">
    <event type="alternative splicing"/>
    <isoform>
        <id>P58956-1</id>
        <name>B</name>
        <sequence type="displayed"/>
    </isoform>
    <isoform>
        <id>P58957-1</id>
        <name>C</name>
        <sequence type="external"/>
    </isoform>
    <isoform>
        <id>P58958-1</id>
        <name>D</name>
        <sequence type="external"/>
    </isoform>
    <isoform>
        <id>P58959-1</id>
        <name>A</name>
        <sequence type="external"/>
    </isoform>
</comment>
<comment type="tissue specificity">
    <text evidence="3 5">Expressed in the adult labellar chemosensory neurons. In larvae, is expressed in neurons of the terminal external chemosensory organ, as well as in the dorsal and posterior pharyngeal sense organs.</text>
</comment>
<comment type="disruption phenotype">
    <text evidence="4">Leads to reduced courtship levels toward females.</text>
</comment>
<comment type="similarity">
    <text evidence="6">Belongs to the insect chemoreceptor superfamily. Gustatory receptor (GR) family. Gr21a subfamily.</text>
</comment>
<sequence>MGTRNRKLLFFLHYQRYLGLTNLDFSKSLHIYWLHGTWSSTAIQIVVVGVFMAALLGALAESLYYMETKSQTGNTFDNAVILTTSVTQLLANLWLRSQQKSQVNLLQRLSQVVELLQFEPYAVPQFRWLYRIWLLVCLIYGAMVTHFGINWLTTMQISRVLTLIGFVYRCVLANFQFTCYTGMVVILKKLLQVQVKQLEHLVSTTTISMAGVAGCLRTHDEILLLGQRELIAVYGGVILFLFIYQVMQCILIFYISNLEGFHSSNDLVLIFCWLAPMLFYLILPLVVNDIHNQANKTAKMLTKVPRTGTGLDRMIEKFLLKNLRQKPILTAYGFFALDKSTLFKLFTAIFTYMVILVQFKEMENSTKSINKF</sequence>
<gene>
    <name type="primary">Gr39a</name>
    <name type="synonym">GR39D.2</name>
    <name type="ORF">CG31622</name>
</gene>
<feature type="chain" id="PRO_0000216509" description="Gustatory and pheromone receptor 39a, isoform B">
    <location>
        <begin position="1"/>
        <end position="372"/>
    </location>
</feature>
<feature type="topological domain" description="Cytoplasmic" evidence="1">
    <location>
        <begin position="1"/>
        <end position="32"/>
    </location>
</feature>
<feature type="transmembrane region" description="Helical; Name=1" evidence="2">
    <location>
        <begin position="33"/>
        <end position="53"/>
    </location>
</feature>
<feature type="topological domain" description="Extracellular" evidence="1">
    <location>
        <begin position="54"/>
        <end position="59"/>
    </location>
</feature>
<feature type="transmembrane region" description="Helical; Name=2" evidence="2">
    <location>
        <begin position="60"/>
        <end position="80"/>
    </location>
</feature>
<feature type="topological domain" description="Cytoplasmic" evidence="1">
    <location>
        <begin position="81"/>
        <end position="122"/>
    </location>
</feature>
<feature type="transmembrane region" description="Helical; Name=3" evidence="2">
    <location>
        <begin position="123"/>
        <end position="143"/>
    </location>
</feature>
<feature type="topological domain" description="Extracellular" evidence="1">
    <location>
        <begin position="144"/>
        <end position="147"/>
    </location>
</feature>
<feature type="transmembrane region" description="Helical; Name=4" evidence="2">
    <location>
        <begin position="148"/>
        <end position="168"/>
    </location>
</feature>
<feature type="topological domain" description="Cytoplasmic" evidence="1">
    <location>
        <begin position="169"/>
        <end position="224"/>
    </location>
</feature>
<feature type="transmembrane region" description="Helical; Name=5" evidence="2">
    <location>
        <begin position="225"/>
        <end position="245"/>
    </location>
</feature>
<feature type="topological domain" description="Extracellular" evidence="1">
    <location>
        <begin position="246"/>
        <end position="265"/>
    </location>
</feature>
<feature type="transmembrane region" description="Helical; Name=6" evidence="2">
    <location>
        <begin position="266"/>
        <end position="286"/>
    </location>
</feature>
<feature type="topological domain" description="Cytoplasmic" evidence="1">
    <location>
        <begin position="287"/>
        <end position="348"/>
    </location>
</feature>
<feature type="transmembrane region" description="Helical; Name=7" evidence="2">
    <location>
        <begin position="349"/>
        <end position="368"/>
    </location>
</feature>
<feature type="topological domain" description="Extracellular" evidence="1">
    <location>
        <position position="369"/>
    </location>
</feature>
<organism>
    <name type="scientific">Drosophila melanogaster</name>
    <name type="common">Fruit fly</name>
    <dbReference type="NCBI Taxonomy" id="7227"/>
    <lineage>
        <taxon>Eukaryota</taxon>
        <taxon>Metazoa</taxon>
        <taxon>Ecdysozoa</taxon>
        <taxon>Arthropoda</taxon>
        <taxon>Hexapoda</taxon>
        <taxon>Insecta</taxon>
        <taxon>Pterygota</taxon>
        <taxon>Neoptera</taxon>
        <taxon>Endopterygota</taxon>
        <taxon>Diptera</taxon>
        <taxon>Brachycera</taxon>
        <taxon>Muscomorpha</taxon>
        <taxon>Ephydroidea</taxon>
        <taxon>Drosophilidae</taxon>
        <taxon>Drosophila</taxon>
        <taxon>Sophophora</taxon>
    </lineage>
</organism>
<keyword id="KW-0025">Alternative splicing</keyword>
<keyword id="KW-1003">Cell membrane</keyword>
<keyword id="KW-0472">Membrane</keyword>
<keyword id="KW-0675">Receptor</keyword>
<keyword id="KW-1185">Reference proteome</keyword>
<keyword id="KW-0807">Transducer</keyword>
<keyword id="KW-0812">Transmembrane</keyword>
<keyword id="KW-1133">Transmembrane helix</keyword>
<proteinExistence type="evidence at transcript level"/>
<accession>P58956</accession>
<reference key="1">
    <citation type="journal article" date="2000" name="Science">
        <title>The genome sequence of Drosophila melanogaster.</title>
        <authorList>
            <person name="Adams M.D."/>
            <person name="Celniker S.E."/>
            <person name="Holt R.A."/>
            <person name="Evans C.A."/>
            <person name="Gocayne J.D."/>
            <person name="Amanatides P.G."/>
            <person name="Scherer S.E."/>
            <person name="Li P.W."/>
            <person name="Hoskins R.A."/>
            <person name="Galle R.F."/>
            <person name="George R.A."/>
            <person name="Lewis S.E."/>
            <person name="Richards S."/>
            <person name="Ashburner M."/>
            <person name="Henderson S.N."/>
            <person name="Sutton G.G."/>
            <person name="Wortman J.R."/>
            <person name="Yandell M.D."/>
            <person name="Zhang Q."/>
            <person name="Chen L.X."/>
            <person name="Brandon R.C."/>
            <person name="Rogers Y.-H.C."/>
            <person name="Blazej R.G."/>
            <person name="Champe M."/>
            <person name="Pfeiffer B.D."/>
            <person name="Wan K.H."/>
            <person name="Doyle C."/>
            <person name="Baxter E.G."/>
            <person name="Helt G."/>
            <person name="Nelson C.R."/>
            <person name="Miklos G.L.G."/>
            <person name="Abril J.F."/>
            <person name="Agbayani A."/>
            <person name="An H.-J."/>
            <person name="Andrews-Pfannkoch C."/>
            <person name="Baldwin D."/>
            <person name="Ballew R.M."/>
            <person name="Basu A."/>
            <person name="Baxendale J."/>
            <person name="Bayraktaroglu L."/>
            <person name="Beasley E.M."/>
            <person name="Beeson K.Y."/>
            <person name="Benos P.V."/>
            <person name="Berman B.P."/>
            <person name="Bhandari D."/>
            <person name="Bolshakov S."/>
            <person name="Borkova D."/>
            <person name="Botchan M.R."/>
            <person name="Bouck J."/>
            <person name="Brokstein P."/>
            <person name="Brottier P."/>
            <person name="Burtis K.C."/>
            <person name="Busam D.A."/>
            <person name="Butler H."/>
            <person name="Cadieu E."/>
            <person name="Center A."/>
            <person name="Chandra I."/>
            <person name="Cherry J.M."/>
            <person name="Cawley S."/>
            <person name="Dahlke C."/>
            <person name="Davenport L.B."/>
            <person name="Davies P."/>
            <person name="de Pablos B."/>
            <person name="Delcher A."/>
            <person name="Deng Z."/>
            <person name="Mays A.D."/>
            <person name="Dew I."/>
            <person name="Dietz S.M."/>
            <person name="Dodson K."/>
            <person name="Doup L.E."/>
            <person name="Downes M."/>
            <person name="Dugan-Rocha S."/>
            <person name="Dunkov B.C."/>
            <person name="Dunn P."/>
            <person name="Durbin K.J."/>
            <person name="Evangelista C.C."/>
            <person name="Ferraz C."/>
            <person name="Ferriera S."/>
            <person name="Fleischmann W."/>
            <person name="Fosler C."/>
            <person name="Gabrielian A.E."/>
            <person name="Garg N.S."/>
            <person name="Gelbart W.M."/>
            <person name="Glasser K."/>
            <person name="Glodek A."/>
            <person name="Gong F."/>
            <person name="Gorrell J.H."/>
            <person name="Gu Z."/>
            <person name="Guan P."/>
            <person name="Harris M."/>
            <person name="Harris N.L."/>
            <person name="Harvey D.A."/>
            <person name="Heiman T.J."/>
            <person name="Hernandez J.R."/>
            <person name="Houck J."/>
            <person name="Hostin D."/>
            <person name="Houston K.A."/>
            <person name="Howland T.J."/>
            <person name="Wei M.-H."/>
            <person name="Ibegwam C."/>
            <person name="Jalali M."/>
            <person name="Kalush F."/>
            <person name="Karpen G.H."/>
            <person name="Ke Z."/>
            <person name="Kennison J.A."/>
            <person name="Ketchum K.A."/>
            <person name="Kimmel B.E."/>
            <person name="Kodira C.D."/>
            <person name="Kraft C.L."/>
            <person name="Kravitz S."/>
            <person name="Kulp D."/>
            <person name="Lai Z."/>
            <person name="Lasko P."/>
            <person name="Lei Y."/>
            <person name="Levitsky A.A."/>
            <person name="Li J.H."/>
            <person name="Li Z."/>
            <person name="Liang Y."/>
            <person name="Lin X."/>
            <person name="Liu X."/>
            <person name="Mattei B."/>
            <person name="McIntosh T.C."/>
            <person name="McLeod M.P."/>
            <person name="McPherson D."/>
            <person name="Merkulov G."/>
            <person name="Milshina N.V."/>
            <person name="Mobarry C."/>
            <person name="Morris J."/>
            <person name="Moshrefi A."/>
            <person name="Mount S.M."/>
            <person name="Moy M."/>
            <person name="Murphy B."/>
            <person name="Murphy L."/>
            <person name="Muzny D.M."/>
            <person name="Nelson D.L."/>
            <person name="Nelson D.R."/>
            <person name="Nelson K.A."/>
            <person name="Nixon K."/>
            <person name="Nusskern D.R."/>
            <person name="Pacleb J.M."/>
            <person name="Palazzolo M."/>
            <person name="Pittman G.S."/>
            <person name="Pan S."/>
            <person name="Pollard J."/>
            <person name="Puri V."/>
            <person name="Reese M.G."/>
            <person name="Reinert K."/>
            <person name="Remington K."/>
            <person name="Saunders R.D.C."/>
            <person name="Scheeler F."/>
            <person name="Shen H."/>
            <person name="Shue B.C."/>
            <person name="Siden-Kiamos I."/>
            <person name="Simpson M."/>
            <person name="Skupski M.P."/>
            <person name="Smith T.J."/>
            <person name="Spier E."/>
            <person name="Spradling A.C."/>
            <person name="Stapleton M."/>
            <person name="Strong R."/>
            <person name="Sun E."/>
            <person name="Svirskas R."/>
            <person name="Tector C."/>
            <person name="Turner R."/>
            <person name="Venter E."/>
            <person name="Wang A.H."/>
            <person name="Wang X."/>
            <person name="Wang Z.-Y."/>
            <person name="Wassarman D.A."/>
            <person name="Weinstock G.M."/>
            <person name="Weissenbach J."/>
            <person name="Williams S.M."/>
            <person name="Woodage T."/>
            <person name="Worley K.C."/>
            <person name="Wu D."/>
            <person name="Yang S."/>
            <person name="Yao Q.A."/>
            <person name="Ye J."/>
            <person name="Yeh R.-F."/>
            <person name="Zaveri J.S."/>
            <person name="Zhan M."/>
            <person name="Zhang G."/>
            <person name="Zhao Q."/>
            <person name="Zheng L."/>
            <person name="Zheng X.H."/>
            <person name="Zhong F.N."/>
            <person name="Zhong W."/>
            <person name="Zhou X."/>
            <person name="Zhu S.C."/>
            <person name="Zhu X."/>
            <person name="Smith H.O."/>
            <person name="Gibbs R.A."/>
            <person name="Myers E.W."/>
            <person name="Rubin G.M."/>
            <person name="Venter J.C."/>
        </authorList>
    </citation>
    <scope>NUCLEOTIDE SEQUENCE [LARGE SCALE GENOMIC DNA]</scope>
    <source>
        <strain>Berkeley</strain>
    </source>
</reference>
<reference key="2">
    <citation type="journal article" date="2002" name="Genome Biol.">
        <title>Annotation of the Drosophila melanogaster euchromatic genome: a systematic review.</title>
        <authorList>
            <person name="Misra S."/>
            <person name="Crosby M.A."/>
            <person name="Mungall C.J."/>
            <person name="Matthews B.B."/>
            <person name="Campbell K.S."/>
            <person name="Hradecky P."/>
            <person name="Huang Y."/>
            <person name="Kaminker J.S."/>
            <person name="Millburn G.H."/>
            <person name="Prochnik S.E."/>
            <person name="Smith C.D."/>
            <person name="Tupy J.L."/>
            <person name="Whitfield E.J."/>
            <person name="Bayraktaroglu L."/>
            <person name="Berman B.P."/>
            <person name="Bettencourt B.R."/>
            <person name="Celniker S.E."/>
            <person name="de Grey A.D.N.J."/>
            <person name="Drysdale R.A."/>
            <person name="Harris N.L."/>
            <person name="Richter J."/>
            <person name="Russo S."/>
            <person name="Schroeder A.J."/>
            <person name="Shu S.Q."/>
            <person name="Stapleton M."/>
            <person name="Yamada C."/>
            <person name="Ashburner M."/>
            <person name="Gelbart W.M."/>
            <person name="Rubin G.M."/>
            <person name="Lewis S.E."/>
        </authorList>
    </citation>
    <scope>GENOME REANNOTATION</scope>
    <source>
        <strain>Berkeley</strain>
    </source>
</reference>
<reference key="3">
    <citation type="journal article" date="2000" name="Science">
        <title>Candidate taste receptors in Drosophila.</title>
        <authorList>
            <person name="Clyne P.J."/>
            <person name="Warr C.G."/>
            <person name="Carlson J.R."/>
        </authorList>
    </citation>
    <scope>IDENTIFICATION</scope>
    <scope>TISSUE SPECIFICITY</scope>
</reference>
<reference key="4">
    <citation type="journal article" date="2001" name="Curr. Biol.">
        <title>Spatially restricted expression of candidate taste receptors in the Drosophila gustatory system.</title>
        <authorList>
            <person name="Dunipace L."/>
            <person name="Meister S."/>
            <person name="McNealy C."/>
            <person name="Amrein H."/>
        </authorList>
    </citation>
    <scope>IDENTIFICATION</scope>
</reference>
<reference key="5">
    <citation type="journal article" date="2011" name="Behav. Genet.">
        <title>Gr39a, a highly diversified gustatory receptor in Drosophila, has a role in sexual behavior.</title>
        <authorList>
            <person name="Watanabe K."/>
            <person name="Toba G."/>
            <person name="Koganezawa M."/>
            <person name="Yamamoto D."/>
        </authorList>
    </citation>
    <scope>FUNCTION</scope>
    <scope>DISRUPTION PHENOTYPE</scope>
</reference>
<reference key="6">
    <citation type="journal article" date="2011" name="J. Neurosci.">
        <title>Molecular and cellular organization of the taste system in the Drosophila larva.</title>
        <authorList>
            <person name="Kwon J.Y."/>
            <person name="Dahanukar A."/>
            <person name="Weiss L.A."/>
            <person name="Carlson J.R."/>
        </authorList>
    </citation>
    <scope>TISSUE SPECIFICITY</scope>
</reference>